<protein>
    <recommendedName>
        <fullName evidence="1">Thymidine kinase</fullName>
        <ecNumber evidence="1">2.7.1.21</ecNumber>
    </recommendedName>
</protein>
<sequence>MAEPARALRVVRIYLDGAHGLGKTTTGRALAAASTAGEGVLFFPEPMAYWRTMFGTDALSGILAASARCAAASHGSARARRAGAPRRRGRGGPGCVLPGQVRGPVLNFARARVRAAAPPGPAPGGTVTLVFDRHPVAACLCYPFARYCLREINAEDLLMLAAAMPPEAPGANLVVCTLPPAEQQRRLAARARPGDRADAGFLVAVRNAYALLVNTCAFLRAGGDGATAGTRWSGRTQMHWPRSQTPVVMNAKCAGAGLRDTLFAALKCRELYPGGGTGLPAVHAWALDALAGRLAALEVFVLDVSAAPDACAAAVLDMRPAMQAACADGAAGATLATLARQFALEMAGEATAGPRGL</sequence>
<keyword id="KW-0067">ATP-binding</keyword>
<keyword id="KW-0237">DNA synthesis</keyword>
<keyword id="KW-0244">Early protein</keyword>
<keyword id="KW-0418">Kinase</keyword>
<keyword id="KW-0547">Nucleotide-binding</keyword>
<keyword id="KW-0808">Transferase</keyword>
<organism>
    <name type="scientific">Bovine herpesvirus 1 (strain 6660)</name>
    <name type="common">BoHV-1</name>
    <name type="synonym">Infectious bovine rhinotracheitis virus</name>
    <dbReference type="NCBI Taxonomy" id="10322"/>
    <lineage>
        <taxon>Viruses</taxon>
        <taxon>Duplodnaviria</taxon>
        <taxon>Heunggongvirae</taxon>
        <taxon>Peploviricota</taxon>
        <taxon>Herviviricetes</taxon>
        <taxon>Herpesvirales</taxon>
        <taxon>Orthoherpesviridae</taxon>
        <taxon>Alphaherpesvirinae</taxon>
        <taxon>Varicellovirus</taxon>
        <taxon>Varicellovirus bovinealpha1</taxon>
    </lineage>
</organism>
<dbReference type="EC" id="2.7.1.21" evidence="1"/>
<dbReference type="EMBL" id="D00438">
    <property type="protein sequence ID" value="BAA00339.1"/>
    <property type="molecule type" value="Genomic_DNA"/>
</dbReference>
<dbReference type="PIR" id="A31330">
    <property type="entry name" value="KIBEBR"/>
</dbReference>
<dbReference type="SMR" id="P24096"/>
<dbReference type="GO" id="GO:0005524">
    <property type="term" value="F:ATP binding"/>
    <property type="evidence" value="ECO:0007669"/>
    <property type="project" value="UniProtKB-KW"/>
</dbReference>
<dbReference type="GO" id="GO:0004797">
    <property type="term" value="F:thymidine kinase activity"/>
    <property type="evidence" value="ECO:0007669"/>
    <property type="project" value="UniProtKB-EC"/>
</dbReference>
<dbReference type="GO" id="GO:0071897">
    <property type="term" value="P:DNA biosynthetic process"/>
    <property type="evidence" value="ECO:0007669"/>
    <property type="project" value="UniProtKB-KW"/>
</dbReference>
<dbReference type="GO" id="GO:0006230">
    <property type="term" value="P:TMP biosynthetic process"/>
    <property type="evidence" value="ECO:0007669"/>
    <property type="project" value="InterPro"/>
</dbReference>
<dbReference type="Gene3D" id="3.40.50.300">
    <property type="entry name" value="P-loop containing nucleotide triphosphate hydrolases"/>
    <property type="match status" value="2"/>
</dbReference>
<dbReference type="HAMAP" id="MF_04029">
    <property type="entry name" value="HSV_KITH"/>
    <property type="match status" value="1"/>
</dbReference>
<dbReference type="InterPro" id="IPR001889">
    <property type="entry name" value="Herpes_TK"/>
</dbReference>
<dbReference type="InterPro" id="IPR027417">
    <property type="entry name" value="P-loop_NTPase"/>
</dbReference>
<dbReference type="Pfam" id="PF00693">
    <property type="entry name" value="Herpes_TK"/>
    <property type="match status" value="1"/>
</dbReference>
<dbReference type="SUPFAM" id="SSF52540">
    <property type="entry name" value="P-loop containing nucleoside triphosphate hydrolases"/>
    <property type="match status" value="1"/>
</dbReference>
<evidence type="ECO:0000255" key="1">
    <source>
        <dbReference type="HAMAP-Rule" id="MF_04029"/>
    </source>
</evidence>
<comment type="function">
    <text evidence="1">Catalyzes the transfer of the gamma-phospho group of ATP to thymidine to generate dTMP in the salvage pathway of pyrimidine synthesis. The dTMP serves as a substrate for DNA polymerase during viral DNA replication. Allows the virus to be reactivated and to grow in non-proliferative cells lacking a high concentration of phosphorylated nucleic acid precursors.</text>
</comment>
<comment type="catalytic activity">
    <reaction evidence="1">
        <text>thymidine + ATP = dTMP + ADP + H(+)</text>
        <dbReference type="Rhea" id="RHEA:19129"/>
        <dbReference type="ChEBI" id="CHEBI:15378"/>
        <dbReference type="ChEBI" id="CHEBI:17748"/>
        <dbReference type="ChEBI" id="CHEBI:30616"/>
        <dbReference type="ChEBI" id="CHEBI:63528"/>
        <dbReference type="ChEBI" id="CHEBI:456216"/>
        <dbReference type="EC" id="2.7.1.21"/>
    </reaction>
</comment>
<comment type="subunit">
    <text evidence="1">Homodimer.</text>
</comment>
<comment type="similarity">
    <text evidence="1">Belongs to the herpesviridae thymidine kinase family.</text>
</comment>
<name>KITH_BHV16</name>
<accession>P24096</accession>
<proteinExistence type="inferred from homology"/>
<reference key="1">
    <citation type="journal article" date="1989" name="J. Gen. Virol.">
        <title>Analysis of the bovine herpesvirus type 1 thymidine kinase (TK) gene from wild-type virus and TK-deficient mutants.</title>
        <authorList>
            <person name="Mittal S.K."/>
            <person name="Field H.J."/>
        </authorList>
    </citation>
    <scope>NUCLEOTIDE SEQUENCE [GENOMIC DNA]</scope>
</reference>
<feature type="chain" id="PRO_0000175061" description="Thymidine kinase">
    <location>
        <begin position="1"/>
        <end position="357"/>
    </location>
</feature>
<feature type="active site" description="Proton acceptor" evidence="1">
    <location>
        <position position="45"/>
    </location>
</feature>
<feature type="binding site" evidence="1">
    <location>
        <begin position="17"/>
        <end position="24"/>
    </location>
    <ligand>
        <name>ATP</name>
        <dbReference type="ChEBI" id="CHEBI:30616"/>
    </ligand>
</feature>
<feature type="binding site" evidence="1">
    <location>
        <position position="186"/>
    </location>
    <ligand>
        <name>ATP</name>
        <dbReference type="ChEBI" id="CHEBI:30616"/>
    </ligand>
</feature>
<feature type="binding site" evidence="1">
    <location>
        <position position="192"/>
    </location>
    <ligand>
        <name>substrate</name>
    </ligand>
</feature>
<gene>
    <name evidence="1" type="primary">TK</name>
</gene>
<organismHost>
    <name type="scientific">Bos taurus</name>
    <name type="common">Bovine</name>
    <dbReference type="NCBI Taxonomy" id="9913"/>
</organismHost>